<feature type="chain" id="PRO_0000211405" description="Uncharacterized transporter ESBP6">
    <location>
        <begin position="1"/>
        <end position="673"/>
    </location>
</feature>
<feature type="topological domain" description="Cytoplasmic" evidence="1">
    <location>
        <begin position="1"/>
        <end position="208"/>
    </location>
</feature>
<feature type="transmembrane region" description="Helical" evidence="1">
    <location>
        <begin position="209"/>
        <end position="229"/>
    </location>
</feature>
<feature type="topological domain" description="Lumenal" evidence="1">
    <location>
        <begin position="230"/>
        <end position="255"/>
    </location>
</feature>
<feature type="transmembrane region" description="Helical" evidence="1">
    <location>
        <begin position="256"/>
        <end position="276"/>
    </location>
</feature>
<feature type="topological domain" description="Cytoplasmic" evidence="1">
    <location>
        <position position="277"/>
    </location>
</feature>
<feature type="transmembrane region" description="Helical" evidence="1">
    <location>
        <begin position="278"/>
        <end position="298"/>
    </location>
</feature>
<feature type="topological domain" description="Lumenal" evidence="1">
    <location>
        <begin position="299"/>
        <end position="315"/>
    </location>
</feature>
<feature type="transmembrane region" description="Helical" evidence="1">
    <location>
        <begin position="316"/>
        <end position="336"/>
    </location>
</feature>
<feature type="topological domain" description="Cytoplasmic" evidence="1">
    <location>
        <begin position="337"/>
        <end position="339"/>
    </location>
</feature>
<feature type="transmembrane region" description="Helical" evidence="1">
    <location>
        <begin position="340"/>
        <end position="360"/>
    </location>
</feature>
<feature type="topological domain" description="Lumenal" evidence="1">
    <location>
        <begin position="361"/>
        <end position="372"/>
    </location>
</feature>
<feature type="transmembrane region" description="Helical" evidence="1">
    <location>
        <begin position="373"/>
        <end position="393"/>
    </location>
</feature>
<feature type="topological domain" description="Cytoplasmic" evidence="1">
    <location>
        <begin position="394"/>
        <end position="426"/>
    </location>
</feature>
<feature type="transmembrane region" description="Helical" evidence="1">
    <location>
        <begin position="427"/>
        <end position="447"/>
    </location>
</feature>
<feature type="topological domain" description="Lumenal" evidence="1">
    <location>
        <begin position="448"/>
        <end position="504"/>
    </location>
</feature>
<feature type="transmembrane region" description="Helical" evidence="1">
    <location>
        <begin position="505"/>
        <end position="525"/>
    </location>
</feature>
<feature type="topological domain" description="Cytoplasmic" evidence="1">
    <location>
        <begin position="526"/>
        <end position="549"/>
    </location>
</feature>
<feature type="transmembrane region" description="Helical" evidence="1">
    <location>
        <begin position="550"/>
        <end position="570"/>
    </location>
</feature>
<feature type="topological domain" description="Lumenal" evidence="1">
    <location>
        <begin position="571"/>
        <end position="584"/>
    </location>
</feature>
<feature type="transmembrane region" description="Helical" evidence="1">
    <location>
        <begin position="585"/>
        <end position="605"/>
    </location>
</feature>
<feature type="topological domain" description="Cytoplasmic" evidence="1">
    <location>
        <begin position="606"/>
        <end position="673"/>
    </location>
</feature>
<feature type="modified residue" description="Phosphoserine" evidence="5">
    <location>
        <position position="57"/>
    </location>
</feature>
<feature type="modified residue" description="Phosphoserine" evidence="4">
    <location>
        <position position="112"/>
    </location>
</feature>
<feature type="modified residue" description="Phosphoserine" evidence="5">
    <location>
        <position position="172"/>
    </location>
</feature>
<feature type="modified residue" description="Phosphoserine" evidence="5">
    <location>
        <position position="637"/>
    </location>
</feature>
<feature type="glycosylation site" description="N-linked (GlcNAc...) asparagine" evidence="1">
    <location>
        <position position="230"/>
    </location>
</feature>
<feature type="glycosylation site" description="N-linked (GlcNAc...) asparagine" evidence="1">
    <location>
        <position position="471"/>
    </location>
</feature>
<feature type="glycosylation site" description="N-linked (GlcNAc...) asparagine" evidence="1">
    <location>
        <position position="492"/>
    </location>
</feature>
<sequence>MSTHSNDYFSASSGMVSETSSEVSSINSSQPVSFSKASIAAPVPCSDLHSTKSNDASRKLSISRTLTNRLNDIKKAVDDDNLQTEENSADVNKILESRFDVADAIRLQHNESVQSKLNIPVTHTTTAGASLSAPSSSAFSASSIQNDTTEHKASMDSKLMRNRLYPASTKHSGKDLEAQGITEFEPDEPTVKKVFTNKSTGQLELPPDGGYGWVVTFCVFLTMFSTWGCNASFGVDLAYYLNHDTYPGASKYDYALIAGLTVFLGQLLSPLVMALMRIIGLRTTMLFGDAVMLAAYLLASFTTKLWQLYVTQGFMVGCSISLIFVPATTVLPGWFLKKRAVAMGVSLLGTGAGGVVYGLATNKMLSDFGNTRWCLRIIGISCSISVLVAIALLKERNPTPAIGLKSPRAMFEQLKAMFSLKVITKPFVVLIALWFMFALFAYNMMVFTLSSYAISKGLSSHDASTLTAILNGSQSIGRPLMGLAGDKFGRANVTIVLTTLLTIYMFAFWIPAHTFVQLIFFSILVGSCVGVANVMNTVLIADMVKPEEFLPAWAFVNYCGAPFLLVCEVIAQALTVEKDKSNPYLHAQIFCGCCFIAALILISILREYSIRMKLTERQAMTNEKLKEWKASEYDTDSADEDWGKLKERKTKYDLLLGPGIKKYFLRMVYPMKV</sequence>
<comment type="subcellular location">
    <subcellularLocation>
        <location evidence="2">Endoplasmic reticulum membrane</location>
        <topology evidence="2">Multi-pass membrane protein</topology>
    </subcellularLocation>
</comment>
<comment type="similarity">
    <text evidence="3">Belongs to the major facilitator superfamily. Monocarboxylate porter (TC 2.A.1.13) family.</text>
</comment>
<comment type="sequence caution" evidence="3">
    <conflict type="frameshift">
        <sequence resource="EMBL-CDS" id="CAA59327"/>
    </conflict>
</comment>
<keyword id="KW-0256">Endoplasmic reticulum</keyword>
<keyword id="KW-0325">Glycoprotein</keyword>
<keyword id="KW-0472">Membrane</keyword>
<keyword id="KW-0597">Phosphoprotein</keyword>
<keyword id="KW-1185">Reference proteome</keyword>
<keyword id="KW-0769">Symport</keyword>
<keyword id="KW-0812">Transmembrane</keyword>
<keyword id="KW-1133">Transmembrane helix</keyword>
<keyword id="KW-0813">Transport</keyword>
<name>ESBP6_YEAST</name>
<organism>
    <name type="scientific">Saccharomyces cerevisiae (strain ATCC 204508 / S288c)</name>
    <name type="common">Baker's yeast</name>
    <dbReference type="NCBI Taxonomy" id="559292"/>
    <lineage>
        <taxon>Eukaryota</taxon>
        <taxon>Fungi</taxon>
        <taxon>Dikarya</taxon>
        <taxon>Ascomycota</taxon>
        <taxon>Saccharomycotina</taxon>
        <taxon>Saccharomycetes</taxon>
        <taxon>Saccharomycetales</taxon>
        <taxon>Saccharomycetaceae</taxon>
        <taxon>Saccharomyces</taxon>
    </lineage>
</organism>
<proteinExistence type="evidence at protein level"/>
<accession>P53918</accession>
<accession>D6W158</accession>
<dbReference type="EMBL" id="Z69382">
    <property type="protein sequence ID" value="CAA93379.1"/>
    <property type="molecule type" value="Genomic_DNA"/>
</dbReference>
<dbReference type="EMBL" id="Z46843">
    <property type="protein sequence ID" value="CAA86900.1"/>
    <property type="molecule type" value="Genomic_DNA"/>
</dbReference>
<dbReference type="EMBL" id="Z71401">
    <property type="protein sequence ID" value="CAA96006.1"/>
    <property type="molecule type" value="Genomic_DNA"/>
</dbReference>
<dbReference type="EMBL" id="X84903">
    <property type="protein sequence ID" value="CAA59327.1"/>
    <property type="status" value="ALT_FRAME"/>
    <property type="molecule type" value="Genomic_DNA"/>
</dbReference>
<dbReference type="EMBL" id="BK006947">
    <property type="protein sequence ID" value="DAA10424.1"/>
    <property type="molecule type" value="Genomic_DNA"/>
</dbReference>
<dbReference type="PIR" id="S59263">
    <property type="entry name" value="S59263"/>
</dbReference>
<dbReference type="RefSeq" id="NP_014274.1">
    <property type="nucleotide sequence ID" value="NM_001182963.1"/>
</dbReference>
<dbReference type="SMR" id="P53918"/>
<dbReference type="BioGRID" id="35702">
    <property type="interactions" value="110"/>
</dbReference>
<dbReference type="DIP" id="DIP-4797N"/>
<dbReference type="FunCoup" id="P53918">
    <property type="interactions" value="546"/>
</dbReference>
<dbReference type="IntAct" id="P53918">
    <property type="interactions" value="5"/>
</dbReference>
<dbReference type="MINT" id="P53918"/>
<dbReference type="STRING" id="4932.YNL125C"/>
<dbReference type="GlyCosmos" id="P53918">
    <property type="glycosylation" value="3 sites, No reported glycans"/>
</dbReference>
<dbReference type="GlyGen" id="P53918">
    <property type="glycosylation" value="3 sites"/>
</dbReference>
<dbReference type="iPTMnet" id="P53918"/>
<dbReference type="PaxDb" id="4932-YNL125C"/>
<dbReference type="PeptideAtlas" id="P53918"/>
<dbReference type="EnsemblFungi" id="YNL125C_mRNA">
    <property type="protein sequence ID" value="YNL125C"/>
    <property type="gene ID" value="YNL125C"/>
</dbReference>
<dbReference type="GeneID" id="855598"/>
<dbReference type="KEGG" id="sce:YNL125C"/>
<dbReference type="AGR" id="SGD:S000005069"/>
<dbReference type="SGD" id="S000005069">
    <property type="gene designation" value="ESBP6"/>
</dbReference>
<dbReference type="VEuPathDB" id="FungiDB:YNL125C"/>
<dbReference type="eggNOG" id="KOG2504">
    <property type="taxonomic scope" value="Eukaryota"/>
</dbReference>
<dbReference type="HOGENOM" id="CLU_001265_1_2_1"/>
<dbReference type="InParanoid" id="P53918"/>
<dbReference type="OMA" id="LYAFWIN"/>
<dbReference type="OrthoDB" id="2213137at2759"/>
<dbReference type="BioCyc" id="YEAST:G3O-33146-MONOMER"/>
<dbReference type="Reactome" id="R-SCE-352230">
    <property type="pathway name" value="Amino acid transport across the plasma membrane"/>
</dbReference>
<dbReference type="Reactome" id="R-SCE-879518">
    <property type="pathway name" value="Transport of organic anions"/>
</dbReference>
<dbReference type="BioGRID-ORCS" id="855598">
    <property type="hits" value="6 hits in 10 CRISPR screens"/>
</dbReference>
<dbReference type="PRO" id="PR:P53918"/>
<dbReference type="Proteomes" id="UP000002311">
    <property type="component" value="Chromosome XIV"/>
</dbReference>
<dbReference type="RNAct" id="P53918">
    <property type="molecule type" value="protein"/>
</dbReference>
<dbReference type="GO" id="GO:0071944">
    <property type="term" value="C:cell periphery"/>
    <property type="evidence" value="ECO:0007005"/>
    <property type="project" value="SGD"/>
</dbReference>
<dbReference type="GO" id="GO:0005783">
    <property type="term" value="C:endoplasmic reticulum"/>
    <property type="evidence" value="ECO:0007005"/>
    <property type="project" value="SGD"/>
</dbReference>
<dbReference type="GO" id="GO:0005789">
    <property type="term" value="C:endoplasmic reticulum membrane"/>
    <property type="evidence" value="ECO:0007669"/>
    <property type="project" value="UniProtKB-SubCell"/>
</dbReference>
<dbReference type="GO" id="GO:0005739">
    <property type="term" value="C:mitochondrion"/>
    <property type="evidence" value="ECO:0000314"/>
    <property type="project" value="SGD"/>
</dbReference>
<dbReference type="GO" id="GO:0005886">
    <property type="term" value="C:plasma membrane"/>
    <property type="evidence" value="ECO:0000318"/>
    <property type="project" value="GO_Central"/>
</dbReference>
<dbReference type="GO" id="GO:0015293">
    <property type="term" value="F:symporter activity"/>
    <property type="evidence" value="ECO:0007669"/>
    <property type="project" value="UniProtKB-KW"/>
</dbReference>
<dbReference type="GO" id="GO:0022857">
    <property type="term" value="F:transmembrane transporter activity"/>
    <property type="evidence" value="ECO:0000318"/>
    <property type="project" value="GO_Central"/>
</dbReference>
<dbReference type="CDD" id="cd17352">
    <property type="entry name" value="MFS_MCT_SLC16"/>
    <property type="match status" value="1"/>
</dbReference>
<dbReference type="FunFam" id="1.20.1250.20:FF:000548">
    <property type="entry name" value="Monocarboxylate permease"/>
    <property type="match status" value="1"/>
</dbReference>
<dbReference type="FunFam" id="1.20.1250.20:FF:000638">
    <property type="entry name" value="Monocarboxylate permease"/>
    <property type="match status" value="1"/>
</dbReference>
<dbReference type="Gene3D" id="1.20.1250.20">
    <property type="entry name" value="MFS general substrate transporter like domains"/>
    <property type="match status" value="2"/>
</dbReference>
<dbReference type="InterPro" id="IPR011701">
    <property type="entry name" value="MFS"/>
</dbReference>
<dbReference type="InterPro" id="IPR036259">
    <property type="entry name" value="MFS_trans_sf"/>
</dbReference>
<dbReference type="InterPro" id="IPR050327">
    <property type="entry name" value="Proton-linked_MCT"/>
</dbReference>
<dbReference type="PANTHER" id="PTHR11360">
    <property type="entry name" value="MONOCARBOXYLATE TRANSPORTER"/>
    <property type="match status" value="1"/>
</dbReference>
<dbReference type="PANTHER" id="PTHR11360:SF315">
    <property type="entry name" value="TRANSPORTER MCH2-RELATED"/>
    <property type="match status" value="1"/>
</dbReference>
<dbReference type="Pfam" id="PF07690">
    <property type="entry name" value="MFS_1"/>
    <property type="match status" value="1"/>
</dbReference>
<dbReference type="SUPFAM" id="SSF103473">
    <property type="entry name" value="MFS general substrate transporter"/>
    <property type="match status" value="1"/>
</dbReference>
<gene>
    <name type="primary">ESBP6</name>
    <name type="synonym">MCH3</name>
    <name type="ordered locus">YNL125C</name>
    <name type="ORF">N1223</name>
    <name type="ORF">N1882</name>
</gene>
<reference key="1">
    <citation type="journal article" date="1997" name="Yeast">
        <title>The DNA sequence of cosmid 14-13b from chromosome XIV of Saccharomyces cerevisiae reveals an unusually high number of overlapping open reading frames.</title>
        <authorList>
            <person name="de Antoni A."/>
            <person name="D'Angelo M."/>
            <person name="Dal Pero F."/>
            <person name="Sartorello F."/>
            <person name="Pandolfo D."/>
            <person name="Pallavicini A."/>
            <person name="Lanfranchi G."/>
            <person name="Valle G."/>
        </authorList>
    </citation>
    <scope>NUCLEOTIDE SEQUENCE [GENOMIC DNA]</scope>
</reference>
<reference key="2">
    <citation type="journal article" date="1995" name="Yeast">
        <title>A 43.5 kb segment of yeast chromosome XIV, which contains MFA2, MEP2, CAP/SRV2, NAM9, FKB1/FPR1/RBP1, MOM22 and CPT1, predicts an adenosine deaminase gene and 14 new open reading frames.</title>
        <authorList>
            <person name="Mallet L."/>
            <person name="Bussereau F."/>
            <person name="Jacquet M."/>
        </authorList>
    </citation>
    <scope>NUCLEOTIDE SEQUENCE [GENOMIC DNA]</scope>
    <source>
        <strain>ATCC 204508 / S288c</strain>
    </source>
</reference>
<reference key="3">
    <citation type="journal article" date="1997" name="Nature">
        <title>The nucleotide sequence of Saccharomyces cerevisiae chromosome XIV and its evolutionary implications.</title>
        <authorList>
            <person name="Philippsen P."/>
            <person name="Kleine K."/>
            <person name="Poehlmann R."/>
            <person name="Duesterhoeft A."/>
            <person name="Hamberg K."/>
            <person name="Hegemann J.H."/>
            <person name="Obermaier B."/>
            <person name="Urrestarazu L.A."/>
            <person name="Aert R."/>
            <person name="Albermann K."/>
            <person name="Altmann R."/>
            <person name="Andre B."/>
            <person name="Baladron V."/>
            <person name="Ballesta J.P.G."/>
            <person name="Becam A.-M."/>
            <person name="Beinhauer J.D."/>
            <person name="Boskovic J."/>
            <person name="Buitrago M.J."/>
            <person name="Bussereau F."/>
            <person name="Coster F."/>
            <person name="Crouzet M."/>
            <person name="D'Angelo M."/>
            <person name="Dal Pero F."/>
            <person name="De Antoni A."/>
            <person name="del Rey F."/>
            <person name="Doignon F."/>
            <person name="Domdey H."/>
            <person name="Dubois E."/>
            <person name="Fiedler T.A."/>
            <person name="Fleig U."/>
            <person name="Floeth M."/>
            <person name="Fritz C."/>
            <person name="Gaillardin C."/>
            <person name="Garcia-Cantalejo J.M."/>
            <person name="Glansdorff N."/>
            <person name="Goffeau A."/>
            <person name="Gueldener U."/>
            <person name="Herbert C.J."/>
            <person name="Heumann K."/>
            <person name="Heuss-Neitzel D."/>
            <person name="Hilbert H."/>
            <person name="Hinni K."/>
            <person name="Iraqui Houssaini I."/>
            <person name="Jacquet M."/>
            <person name="Jimenez A."/>
            <person name="Jonniaux J.-L."/>
            <person name="Karpfinger-Hartl L."/>
            <person name="Lanfranchi G."/>
            <person name="Lepingle A."/>
            <person name="Levesque H."/>
            <person name="Lyck R."/>
            <person name="Maftahi M."/>
            <person name="Mallet L."/>
            <person name="Maurer C.T.C."/>
            <person name="Messenguy F."/>
            <person name="Mewes H.-W."/>
            <person name="Moestl D."/>
            <person name="Nasr F."/>
            <person name="Nicaud J.-M."/>
            <person name="Niedenthal R.K."/>
            <person name="Pandolfo D."/>
            <person name="Pierard A."/>
            <person name="Piravandi E."/>
            <person name="Planta R.J."/>
            <person name="Pohl T.M."/>
            <person name="Purnelle B."/>
            <person name="Rebischung C."/>
            <person name="Remacha M.A."/>
            <person name="Revuelta J.L."/>
            <person name="Rinke M."/>
            <person name="Saiz J.E."/>
            <person name="Sartorello F."/>
            <person name="Scherens B."/>
            <person name="Sen-Gupta M."/>
            <person name="Soler-Mira A."/>
            <person name="Urbanus J.H.M."/>
            <person name="Valle G."/>
            <person name="Van Dyck L."/>
            <person name="Verhasselt P."/>
            <person name="Vierendeels F."/>
            <person name="Vissers S."/>
            <person name="Voet M."/>
            <person name="Volckaert G."/>
            <person name="Wach A."/>
            <person name="Wambutt R."/>
            <person name="Wedler H."/>
            <person name="Zollner A."/>
            <person name="Hani J."/>
        </authorList>
    </citation>
    <scope>NUCLEOTIDE SEQUENCE [LARGE SCALE GENOMIC DNA]</scope>
    <source>
        <strain>ATCC 204508 / S288c</strain>
    </source>
</reference>
<reference key="4">
    <citation type="journal article" date="2014" name="G3 (Bethesda)">
        <title>The reference genome sequence of Saccharomyces cerevisiae: Then and now.</title>
        <authorList>
            <person name="Engel S.R."/>
            <person name="Dietrich F.S."/>
            <person name="Fisk D.G."/>
            <person name="Binkley G."/>
            <person name="Balakrishnan R."/>
            <person name="Costanzo M.C."/>
            <person name="Dwight S.S."/>
            <person name="Hitz B.C."/>
            <person name="Karra K."/>
            <person name="Nash R.S."/>
            <person name="Weng S."/>
            <person name="Wong E.D."/>
            <person name="Lloyd P."/>
            <person name="Skrzypek M.S."/>
            <person name="Miyasato S.R."/>
            <person name="Simison M."/>
            <person name="Cherry J.M."/>
        </authorList>
    </citation>
    <scope>GENOME REANNOTATION</scope>
    <source>
        <strain>ATCC 204508 / S288c</strain>
    </source>
</reference>
<reference key="5">
    <citation type="submission" date="1995-02" db="EMBL/GenBank/DDBJ databases">
        <authorList>
            <person name="Mai B."/>
            <person name="Lipp M."/>
        </authorList>
    </citation>
    <scope>NUCLEOTIDE SEQUENCE [GENOMIC DNA] OF 152-673</scope>
</reference>
<reference key="6">
    <citation type="journal article" date="2003" name="Nature">
        <title>Global analysis of protein localization in budding yeast.</title>
        <authorList>
            <person name="Huh W.-K."/>
            <person name="Falvo J.V."/>
            <person name="Gerke L.C."/>
            <person name="Carroll A.S."/>
            <person name="Howson R.W."/>
            <person name="Weissman J.S."/>
            <person name="O'Shea E.K."/>
        </authorList>
    </citation>
    <scope>SUBCELLULAR LOCATION [LARGE SCALE ANALYSIS]</scope>
</reference>
<reference key="7">
    <citation type="journal article" date="2006" name="Proc. Natl. Acad. Sci. U.S.A.">
        <title>A global topology map of the Saccharomyces cerevisiae membrane proteome.</title>
        <authorList>
            <person name="Kim H."/>
            <person name="Melen K."/>
            <person name="Oesterberg M."/>
            <person name="von Heijne G."/>
        </authorList>
    </citation>
    <scope>TOPOLOGY [LARGE SCALE ANALYSIS]</scope>
    <source>
        <strain>ATCC 208353 / W303-1A</strain>
    </source>
</reference>
<reference key="8">
    <citation type="journal article" date="2008" name="Mol. Cell. Proteomics">
        <title>A multidimensional chromatography technology for in-depth phosphoproteome analysis.</title>
        <authorList>
            <person name="Albuquerque C.P."/>
            <person name="Smolka M.B."/>
            <person name="Payne S.H."/>
            <person name="Bafna V."/>
            <person name="Eng J."/>
            <person name="Zhou H."/>
        </authorList>
    </citation>
    <scope>PHOSPHORYLATION [LARGE SCALE ANALYSIS] AT SER-112</scope>
    <scope>IDENTIFICATION BY MASS SPECTROMETRY [LARGE SCALE ANALYSIS]</scope>
</reference>
<reference key="9">
    <citation type="journal article" date="2009" name="Science">
        <title>Global analysis of Cdk1 substrate phosphorylation sites provides insights into evolution.</title>
        <authorList>
            <person name="Holt L.J."/>
            <person name="Tuch B.B."/>
            <person name="Villen J."/>
            <person name="Johnson A.D."/>
            <person name="Gygi S.P."/>
            <person name="Morgan D.O."/>
        </authorList>
    </citation>
    <scope>PHOSPHORYLATION [LARGE SCALE ANALYSIS] AT SER-57; SER-172 AND SER-637</scope>
    <scope>IDENTIFICATION BY MASS SPECTROMETRY [LARGE SCALE ANALYSIS]</scope>
</reference>
<protein>
    <recommendedName>
        <fullName>Uncharacterized transporter ESBP6</fullName>
    </recommendedName>
</protein>
<evidence type="ECO:0000255" key="1"/>
<evidence type="ECO:0000269" key="2">
    <source>
    </source>
</evidence>
<evidence type="ECO:0000305" key="3"/>
<evidence type="ECO:0007744" key="4">
    <source>
    </source>
</evidence>
<evidence type="ECO:0007744" key="5">
    <source>
    </source>
</evidence>